<keyword id="KW-0175">Coiled coil</keyword>
<keyword id="KW-0229">DNA integration</keyword>
<keyword id="KW-0233">DNA recombination</keyword>
<keyword id="KW-0238">DNA-binding</keyword>
<keyword id="KW-1185">Reference proteome</keyword>
<sequence length="190" mass="22172">MSKYMGGKEASSVLGVHQRTLYQWDKKGWIKTIRTKGGKRLYDVGSYLADKDEESKEDHKLSICYVRVSSNNQKDDLERQIKFMKKKYPNHTIIKDISSGINMNRKGLNKIIDLAIEGRVKEVVVAYKDRLARFGFSLIERLIEKYSDGKIVVVRKKENQEPQEELMEDMMDVMNVFIARRNGLKKYSNK</sequence>
<comment type="function">
    <text evidence="1">Resolvase catalyzes the resolution (a site-specific recombination) of the cointegrated replicon to yield the final transposition products.</text>
</comment>
<comment type="similarity">
    <text evidence="4">Belongs to the site-specific recombinase resolvase family.</text>
</comment>
<gene>
    <name type="ordered locus">MIMI_R771</name>
</gene>
<feature type="chain" id="PRO_0000247402" description="Putative resolvase R771">
    <location>
        <begin position="1"/>
        <end position="190"/>
    </location>
</feature>
<feature type="domain" description="Resolvase/invertase-type recombinase catalytic" evidence="3">
    <location>
        <begin position="61"/>
        <end position="190"/>
    </location>
</feature>
<feature type="DNA-binding region" description="H-T-H motif" evidence="2">
    <location>
        <begin position="11"/>
        <end position="30"/>
    </location>
</feature>
<feature type="coiled-coil region" evidence="2">
    <location>
        <begin position="66"/>
        <end position="92"/>
    </location>
</feature>
<feature type="active site" description="O-(5'-phospho-DNA)-serine intermediate" evidence="3">
    <location>
        <position position="69"/>
    </location>
</feature>
<dbReference type="EMBL" id="AY653733">
    <property type="protein sequence ID" value="AAV51031.1"/>
    <property type="molecule type" value="Genomic_DNA"/>
</dbReference>
<dbReference type="SMR" id="Q5UPQ7"/>
<dbReference type="KEGG" id="vg:9925430"/>
<dbReference type="OrthoDB" id="26022at10239"/>
<dbReference type="Proteomes" id="UP000001134">
    <property type="component" value="Genome"/>
</dbReference>
<dbReference type="GO" id="GO:0003677">
    <property type="term" value="F:DNA binding"/>
    <property type="evidence" value="ECO:0007669"/>
    <property type="project" value="UniProtKB-KW"/>
</dbReference>
<dbReference type="GO" id="GO:0000150">
    <property type="term" value="F:DNA strand exchange activity"/>
    <property type="evidence" value="ECO:0007669"/>
    <property type="project" value="InterPro"/>
</dbReference>
<dbReference type="GO" id="GO:0015074">
    <property type="term" value="P:DNA integration"/>
    <property type="evidence" value="ECO:0007669"/>
    <property type="project" value="UniProtKB-KW"/>
</dbReference>
<dbReference type="GO" id="GO:0006355">
    <property type="term" value="P:regulation of DNA-templated transcription"/>
    <property type="evidence" value="ECO:0007669"/>
    <property type="project" value="InterPro"/>
</dbReference>
<dbReference type="Gene3D" id="1.10.1660.10">
    <property type="match status" value="1"/>
</dbReference>
<dbReference type="Gene3D" id="1.10.287.2170">
    <property type="match status" value="1"/>
</dbReference>
<dbReference type="Gene3D" id="3.40.50.1390">
    <property type="entry name" value="Resolvase, N-terminal catalytic domain"/>
    <property type="match status" value="1"/>
</dbReference>
<dbReference type="InterPro" id="IPR009061">
    <property type="entry name" value="DNA-bd_dom_put_sf"/>
</dbReference>
<dbReference type="InterPro" id="IPR000551">
    <property type="entry name" value="MerR-type_HTH_dom"/>
</dbReference>
<dbReference type="InterPro" id="IPR051491">
    <property type="entry name" value="Recombinase/Transposase-rel"/>
</dbReference>
<dbReference type="InterPro" id="IPR006118">
    <property type="entry name" value="Recombinase_CS"/>
</dbReference>
<dbReference type="InterPro" id="IPR006119">
    <property type="entry name" value="Resolv_N"/>
</dbReference>
<dbReference type="InterPro" id="IPR036162">
    <property type="entry name" value="Resolvase-like_N_sf"/>
</dbReference>
<dbReference type="InterPro" id="IPR048046">
    <property type="entry name" value="Transpos_IS607"/>
</dbReference>
<dbReference type="NCBIfam" id="NF033518">
    <property type="entry name" value="transpos_IS607"/>
    <property type="match status" value="1"/>
</dbReference>
<dbReference type="PANTHER" id="PTHR36172">
    <property type="match status" value="1"/>
</dbReference>
<dbReference type="PANTHER" id="PTHR36172:SF1">
    <property type="entry name" value="RESOLVASE-RELATED"/>
    <property type="match status" value="1"/>
</dbReference>
<dbReference type="Pfam" id="PF00376">
    <property type="entry name" value="MerR"/>
    <property type="match status" value="1"/>
</dbReference>
<dbReference type="Pfam" id="PF00239">
    <property type="entry name" value="Resolvase"/>
    <property type="match status" value="1"/>
</dbReference>
<dbReference type="SMART" id="SM00857">
    <property type="entry name" value="Resolvase"/>
    <property type="match status" value="1"/>
</dbReference>
<dbReference type="SUPFAM" id="SSF46955">
    <property type="entry name" value="Putative DNA-binding domain"/>
    <property type="match status" value="1"/>
</dbReference>
<dbReference type="SUPFAM" id="SSF53041">
    <property type="entry name" value="Resolvase-like"/>
    <property type="match status" value="1"/>
</dbReference>
<dbReference type="PROSITE" id="PS00397">
    <property type="entry name" value="RECOMBINASES_1"/>
    <property type="match status" value="1"/>
</dbReference>
<dbReference type="PROSITE" id="PS51736">
    <property type="entry name" value="RECOMBINASES_3"/>
    <property type="match status" value="1"/>
</dbReference>
<name>YR771_MIMIV</name>
<protein>
    <recommendedName>
        <fullName>Putative resolvase R771</fullName>
    </recommendedName>
</protein>
<proteinExistence type="inferred from homology"/>
<accession>Q5UPQ7</accession>
<reference key="1">
    <citation type="journal article" date="2004" name="Science">
        <title>The 1.2-megabase genome sequence of Mimivirus.</title>
        <authorList>
            <person name="Raoult D."/>
            <person name="Audic S."/>
            <person name="Robert C."/>
            <person name="Abergel C."/>
            <person name="Renesto P."/>
            <person name="Ogata H."/>
            <person name="La Scola B."/>
            <person name="Susan M."/>
            <person name="Claverie J.-M."/>
        </authorList>
    </citation>
    <scope>NUCLEOTIDE SEQUENCE [LARGE SCALE GENOMIC DNA]</scope>
    <source>
        <strain>Rowbotham-Bradford</strain>
    </source>
</reference>
<organismHost>
    <name type="scientific">Acanthamoeba polyphaga</name>
    <name type="common">Amoeba</name>
    <dbReference type="NCBI Taxonomy" id="5757"/>
</organismHost>
<organism>
    <name type="scientific">Acanthamoeba polyphaga mimivirus</name>
    <name type="common">APMV</name>
    <dbReference type="NCBI Taxonomy" id="212035"/>
    <lineage>
        <taxon>Viruses</taxon>
        <taxon>Varidnaviria</taxon>
        <taxon>Bamfordvirae</taxon>
        <taxon>Nucleocytoviricota</taxon>
        <taxon>Megaviricetes</taxon>
        <taxon>Imitervirales</taxon>
        <taxon>Mimiviridae</taxon>
        <taxon>Megamimivirinae</taxon>
        <taxon>Mimivirus</taxon>
        <taxon>Mimivirus bradfordmassiliense</taxon>
    </lineage>
</organism>
<evidence type="ECO:0000250" key="1"/>
<evidence type="ECO:0000255" key="2"/>
<evidence type="ECO:0000255" key="3">
    <source>
        <dbReference type="PROSITE-ProRule" id="PRU01072"/>
    </source>
</evidence>
<evidence type="ECO:0000305" key="4"/>